<reference key="1">
    <citation type="journal article" date="2003" name="Proc. Natl. Acad. Sci. U.S.A.">
        <title>The complete genome sequence of Mycobacterium bovis.</title>
        <authorList>
            <person name="Garnier T."/>
            <person name="Eiglmeier K."/>
            <person name="Camus J.-C."/>
            <person name="Medina N."/>
            <person name="Mansoor H."/>
            <person name="Pryor M."/>
            <person name="Duthoy S."/>
            <person name="Grondin S."/>
            <person name="Lacroix C."/>
            <person name="Monsempe C."/>
            <person name="Simon S."/>
            <person name="Harris B."/>
            <person name="Atkin R."/>
            <person name="Doggett J."/>
            <person name="Mayes R."/>
            <person name="Keating L."/>
            <person name="Wheeler P.R."/>
            <person name="Parkhill J."/>
            <person name="Barrell B.G."/>
            <person name="Cole S.T."/>
            <person name="Gordon S.V."/>
            <person name="Hewinson R.G."/>
        </authorList>
    </citation>
    <scope>NUCLEOTIDE SEQUENCE [LARGE SCALE GENOMIC DNA]</scope>
    <source>
        <strain>ATCC BAA-935 / AF2122/97</strain>
    </source>
</reference>
<reference key="2">
    <citation type="journal article" date="2017" name="Genome Announc.">
        <title>Updated reference genome sequence and annotation of Mycobacterium bovis AF2122/97.</title>
        <authorList>
            <person name="Malone K.M."/>
            <person name="Farrell D."/>
            <person name="Stuber T.P."/>
            <person name="Schubert O.T."/>
            <person name="Aebersold R."/>
            <person name="Robbe-Austerman S."/>
            <person name="Gordon S.V."/>
        </authorList>
    </citation>
    <scope>NUCLEOTIDE SEQUENCE [LARGE SCALE GENOMIC DNA]</scope>
    <scope>GENOME REANNOTATION</scope>
    <source>
        <strain>ATCC BAA-935 / AF2122/97</strain>
    </source>
</reference>
<accession>P63497</accession>
<accession>A0A1R3Y466</accession>
<accession>O50404</accession>
<accession>X2BPC8</accession>
<gene>
    <name type="primary">amiD</name>
    <name type="ordered locus">BQ2027_MB3409</name>
</gene>
<comment type="catalytic activity">
    <reaction>
        <text>a monocarboxylic acid amide + H2O = a monocarboxylate + NH4(+)</text>
        <dbReference type="Rhea" id="RHEA:12020"/>
        <dbReference type="ChEBI" id="CHEBI:15377"/>
        <dbReference type="ChEBI" id="CHEBI:28938"/>
        <dbReference type="ChEBI" id="CHEBI:35757"/>
        <dbReference type="ChEBI" id="CHEBI:83628"/>
        <dbReference type="EC" id="3.5.1.4"/>
    </reaction>
</comment>
<comment type="similarity">
    <text evidence="2">Belongs to the amidase family.</text>
</comment>
<organism>
    <name type="scientific">Mycobacterium bovis (strain ATCC BAA-935 / AF2122/97)</name>
    <dbReference type="NCBI Taxonomy" id="233413"/>
    <lineage>
        <taxon>Bacteria</taxon>
        <taxon>Bacillati</taxon>
        <taxon>Actinomycetota</taxon>
        <taxon>Actinomycetes</taxon>
        <taxon>Mycobacteriales</taxon>
        <taxon>Mycobacteriaceae</taxon>
        <taxon>Mycobacterium</taxon>
        <taxon>Mycobacterium tuberculosis complex</taxon>
    </lineage>
</organism>
<keyword id="KW-0378">Hydrolase</keyword>
<keyword id="KW-1185">Reference proteome</keyword>
<proteinExistence type="inferred from homology"/>
<dbReference type="EC" id="3.5.1.4"/>
<dbReference type="EMBL" id="LT708304">
    <property type="protein sequence ID" value="SIU02038.1"/>
    <property type="molecule type" value="Genomic_DNA"/>
</dbReference>
<dbReference type="RefSeq" id="NP_857050.1">
    <property type="nucleotide sequence ID" value="NC_002945.3"/>
</dbReference>
<dbReference type="RefSeq" id="WP_003417900.1">
    <property type="nucleotide sequence ID" value="NC_002945.4"/>
</dbReference>
<dbReference type="SMR" id="P63497"/>
<dbReference type="KEGG" id="mbo:BQ2027_MB3409"/>
<dbReference type="PATRIC" id="fig|233413.5.peg.3745"/>
<dbReference type="Proteomes" id="UP000001419">
    <property type="component" value="Chromosome"/>
</dbReference>
<dbReference type="GO" id="GO:0004040">
    <property type="term" value="F:amidase activity"/>
    <property type="evidence" value="ECO:0007669"/>
    <property type="project" value="UniProtKB-EC"/>
</dbReference>
<dbReference type="Gene3D" id="3.90.1300.10">
    <property type="entry name" value="Amidase signature (AS) domain"/>
    <property type="match status" value="1"/>
</dbReference>
<dbReference type="InterPro" id="IPR000120">
    <property type="entry name" value="Amidase"/>
</dbReference>
<dbReference type="InterPro" id="IPR020556">
    <property type="entry name" value="Amidase_CS"/>
</dbReference>
<dbReference type="InterPro" id="IPR023631">
    <property type="entry name" value="Amidase_dom"/>
</dbReference>
<dbReference type="InterPro" id="IPR036928">
    <property type="entry name" value="AS_sf"/>
</dbReference>
<dbReference type="PANTHER" id="PTHR11895:SF176">
    <property type="entry name" value="AMIDASE AMID-RELATED"/>
    <property type="match status" value="1"/>
</dbReference>
<dbReference type="PANTHER" id="PTHR11895">
    <property type="entry name" value="TRANSAMIDASE"/>
    <property type="match status" value="1"/>
</dbReference>
<dbReference type="Pfam" id="PF01425">
    <property type="entry name" value="Amidase"/>
    <property type="match status" value="1"/>
</dbReference>
<dbReference type="SUPFAM" id="SSF75304">
    <property type="entry name" value="Amidase signature (AS) enzymes"/>
    <property type="match status" value="1"/>
</dbReference>
<dbReference type="PROSITE" id="PS00571">
    <property type="entry name" value="AMIDASES"/>
    <property type="match status" value="1"/>
</dbReference>
<protein>
    <recommendedName>
        <fullName>Putative amidase AmiD</fullName>
        <ecNumber>3.5.1.4</ecNumber>
    </recommendedName>
</protein>
<evidence type="ECO:0000250" key="1"/>
<evidence type="ECO:0000305" key="2"/>
<name>AMI4_MYCBO</name>
<sequence>MTDADSAVPPRLDEDAISKLELTEVADLIRTRQLTSAEVTESTLRRIERLDPQLKSYAFVMPETALAAARAADADIARGHYEGVLHGVPIGVKDLCYTVDAPTAAGTTIFRDFRPAYDATVVARLRAAGAVIIGKLAMTEGAYLGYHPSLPTPVNPWDPTAWAGVSSSGCGVATAAGLCFGSIGSDTGGSIRFPTSMCGVTGIKPTWGRVSRHGVVELAASYDHVGPITRSAHDAAVLLSVIAGSDIHDPSCSAEPVPDYAADLALTRIPRVGVDWSQTTSFDEDTTAMLADVVKTLDDIGWPVIDVKLPALAPMVAAFGKMRAVETAIAHADTYPARADEYGPIMRAMIDAGHRLAAVEYQTLTERRLEFTRSLRRVFHDVDILLMPSAGIASPTLETMRGLGQDPELTARLAMPTAPFNVSGNPAICLPAGTTARGTPLGVQFIGREFDEHLLVRAGHAFQQVTGYHRRRPPV</sequence>
<feature type="chain" id="PRO_0000105261" description="Putative amidase AmiD">
    <location>
        <begin position="1"/>
        <end position="475"/>
    </location>
</feature>
<feature type="active site" description="Charge relay system" evidence="1">
    <location>
        <position position="93"/>
    </location>
</feature>
<feature type="active site" description="Charge relay system" evidence="1">
    <location>
        <position position="166"/>
    </location>
</feature>
<feature type="active site" description="Acyl-ester intermediate" evidence="1">
    <location>
        <position position="190"/>
    </location>
</feature>